<comment type="function">
    <text evidence="1">Required for rescue of stalled ribosomes mediated by trans-translation. Binds to transfer-messenger RNA (tmRNA), required for stable association of tmRNA with ribosomes. tmRNA and SmpB together mimic tRNA shape, replacing the anticodon stem-loop with SmpB. tmRNA is encoded by the ssrA gene; the 2 termini fold to resemble tRNA(Ala) and it encodes a 'tag peptide', a short internal open reading frame. During trans-translation Ala-aminoacylated tmRNA acts like a tRNA, entering the A-site of stalled ribosomes, displacing the stalled mRNA. The ribosome then switches to translate the ORF on the tmRNA; the nascent peptide is terminated with the 'tag peptide' encoded by the tmRNA and targeted for degradation. The ribosome is freed to recommence translation, which seems to be the essential function of trans-translation.</text>
</comment>
<comment type="subcellular location">
    <subcellularLocation>
        <location evidence="1">Cytoplasm</location>
    </subcellularLocation>
    <text evidence="1">The tmRNA-SmpB complex associates with stalled 70S ribosomes.</text>
</comment>
<comment type="similarity">
    <text evidence="1">Belongs to the SmpB family.</text>
</comment>
<gene>
    <name evidence="1" type="primary">smpB</name>
    <name type="ordered locus">SUB0524</name>
</gene>
<proteinExistence type="inferred from homology"/>
<reference key="1">
    <citation type="journal article" date="2009" name="BMC Genomics">
        <title>Evidence for niche adaptation in the genome of the bovine pathogen Streptococcus uberis.</title>
        <authorList>
            <person name="Ward P.N."/>
            <person name="Holden M.T.G."/>
            <person name="Leigh J.A."/>
            <person name="Lennard N."/>
            <person name="Bignell A."/>
            <person name="Barron A."/>
            <person name="Clark L."/>
            <person name="Quail M.A."/>
            <person name="Woodward J."/>
            <person name="Barrell B.G."/>
            <person name="Egan S.A."/>
            <person name="Field T.R."/>
            <person name="Maskell D."/>
            <person name="Kehoe M."/>
            <person name="Dowson C.G."/>
            <person name="Chanter N."/>
            <person name="Whatmore A.M."/>
            <person name="Bentley S.D."/>
            <person name="Parkhill J."/>
        </authorList>
    </citation>
    <scope>NUCLEOTIDE SEQUENCE [LARGE SCALE GENOMIC DNA]</scope>
    <source>
        <strain>ATCC BAA-854 / 0140J</strain>
    </source>
</reference>
<keyword id="KW-0963">Cytoplasm</keyword>
<keyword id="KW-1185">Reference proteome</keyword>
<keyword id="KW-0694">RNA-binding</keyword>
<protein>
    <recommendedName>
        <fullName evidence="1">SsrA-binding protein</fullName>
    </recommendedName>
    <alternativeName>
        <fullName evidence="1">Small protein B</fullName>
    </alternativeName>
</protein>
<organism>
    <name type="scientific">Streptococcus uberis (strain ATCC BAA-854 / 0140J)</name>
    <dbReference type="NCBI Taxonomy" id="218495"/>
    <lineage>
        <taxon>Bacteria</taxon>
        <taxon>Bacillati</taxon>
        <taxon>Bacillota</taxon>
        <taxon>Bacilli</taxon>
        <taxon>Lactobacillales</taxon>
        <taxon>Streptococcaceae</taxon>
        <taxon>Streptococcus</taxon>
    </lineage>
</organism>
<accession>B9DTZ7</accession>
<name>SSRP_STRU0</name>
<sequence>MAKGEGNLLAQNKKASHDYHIVETIEAGIVLTGTEIKSVRAARIQLKDGFAQIKNGEAWLMNVHIAPFEQGNIWNADPERTRKLLLKKREINHLANELKGTGMTLIPLKVYLKDGFAKILLGLAKGKHDYDKRESIKRREQDRDIKRVMKSINAR</sequence>
<dbReference type="EMBL" id="AM946015">
    <property type="protein sequence ID" value="CAR41271.1"/>
    <property type="molecule type" value="Genomic_DNA"/>
</dbReference>
<dbReference type="RefSeq" id="WP_012658050.1">
    <property type="nucleotide sequence ID" value="NC_012004.1"/>
</dbReference>
<dbReference type="SMR" id="B9DTZ7"/>
<dbReference type="STRING" id="218495.SUB0524"/>
<dbReference type="KEGG" id="sub:SUB0524"/>
<dbReference type="eggNOG" id="COG0691">
    <property type="taxonomic scope" value="Bacteria"/>
</dbReference>
<dbReference type="HOGENOM" id="CLU_108953_0_0_9"/>
<dbReference type="OrthoDB" id="9805462at2"/>
<dbReference type="Proteomes" id="UP000000449">
    <property type="component" value="Chromosome"/>
</dbReference>
<dbReference type="GO" id="GO:0005829">
    <property type="term" value="C:cytosol"/>
    <property type="evidence" value="ECO:0007669"/>
    <property type="project" value="TreeGrafter"/>
</dbReference>
<dbReference type="GO" id="GO:0003723">
    <property type="term" value="F:RNA binding"/>
    <property type="evidence" value="ECO:0007669"/>
    <property type="project" value="UniProtKB-UniRule"/>
</dbReference>
<dbReference type="GO" id="GO:0070929">
    <property type="term" value="P:trans-translation"/>
    <property type="evidence" value="ECO:0007669"/>
    <property type="project" value="UniProtKB-UniRule"/>
</dbReference>
<dbReference type="CDD" id="cd09294">
    <property type="entry name" value="SmpB"/>
    <property type="match status" value="1"/>
</dbReference>
<dbReference type="Gene3D" id="2.40.280.10">
    <property type="match status" value="1"/>
</dbReference>
<dbReference type="HAMAP" id="MF_00023">
    <property type="entry name" value="SmpB"/>
    <property type="match status" value="1"/>
</dbReference>
<dbReference type="InterPro" id="IPR023620">
    <property type="entry name" value="SmpB"/>
</dbReference>
<dbReference type="InterPro" id="IPR000037">
    <property type="entry name" value="SsrA-bd_prot"/>
</dbReference>
<dbReference type="InterPro" id="IPR020081">
    <property type="entry name" value="SsrA-bd_prot_CS"/>
</dbReference>
<dbReference type="NCBIfam" id="NF003843">
    <property type="entry name" value="PRK05422.1"/>
    <property type="match status" value="1"/>
</dbReference>
<dbReference type="NCBIfam" id="TIGR00086">
    <property type="entry name" value="smpB"/>
    <property type="match status" value="1"/>
</dbReference>
<dbReference type="PANTHER" id="PTHR30308:SF2">
    <property type="entry name" value="SSRA-BINDING PROTEIN"/>
    <property type="match status" value="1"/>
</dbReference>
<dbReference type="PANTHER" id="PTHR30308">
    <property type="entry name" value="TMRNA-BINDING COMPONENT OF TRANS-TRANSLATION TAGGING COMPLEX"/>
    <property type="match status" value="1"/>
</dbReference>
<dbReference type="Pfam" id="PF01668">
    <property type="entry name" value="SmpB"/>
    <property type="match status" value="1"/>
</dbReference>
<dbReference type="SUPFAM" id="SSF74982">
    <property type="entry name" value="Small protein B (SmpB)"/>
    <property type="match status" value="1"/>
</dbReference>
<dbReference type="PROSITE" id="PS01317">
    <property type="entry name" value="SSRP"/>
    <property type="match status" value="1"/>
</dbReference>
<feature type="chain" id="PRO_1000197631" description="SsrA-binding protein">
    <location>
        <begin position="1"/>
        <end position="155"/>
    </location>
</feature>
<evidence type="ECO:0000255" key="1">
    <source>
        <dbReference type="HAMAP-Rule" id="MF_00023"/>
    </source>
</evidence>